<gene>
    <name evidence="1" type="primary">rbsD</name>
    <name type="ordered locus">SeSA_A4093</name>
</gene>
<reference key="1">
    <citation type="journal article" date="2011" name="J. Bacteriol.">
        <title>Comparative genomics of 28 Salmonella enterica isolates: evidence for CRISPR-mediated adaptive sublineage evolution.</title>
        <authorList>
            <person name="Fricke W.F."/>
            <person name="Mammel M.K."/>
            <person name="McDermott P.F."/>
            <person name="Tartera C."/>
            <person name="White D.G."/>
            <person name="Leclerc J.E."/>
            <person name="Ravel J."/>
            <person name="Cebula T.A."/>
        </authorList>
    </citation>
    <scope>NUCLEOTIDE SEQUENCE [LARGE SCALE GENOMIC DNA]</scope>
    <source>
        <strain>CVM19633</strain>
    </source>
</reference>
<dbReference type="EC" id="5.4.99.62" evidence="1"/>
<dbReference type="EMBL" id="CP001127">
    <property type="protein sequence ID" value="ACF89059.1"/>
    <property type="molecule type" value="Genomic_DNA"/>
</dbReference>
<dbReference type="RefSeq" id="WP_000715944.1">
    <property type="nucleotide sequence ID" value="NC_011094.1"/>
</dbReference>
<dbReference type="SMR" id="B4TN49"/>
<dbReference type="KEGG" id="sew:SeSA_A4093"/>
<dbReference type="HOGENOM" id="CLU_135498_0_0_6"/>
<dbReference type="UniPathway" id="UPA00916">
    <property type="reaction ID" value="UER00888"/>
</dbReference>
<dbReference type="Proteomes" id="UP000001865">
    <property type="component" value="Chromosome"/>
</dbReference>
<dbReference type="GO" id="GO:0005829">
    <property type="term" value="C:cytosol"/>
    <property type="evidence" value="ECO:0007669"/>
    <property type="project" value="TreeGrafter"/>
</dbReference>
<dbReference type="GO" id="GO:0062193">
    <property type="term" value="F:D-ribose pyranase activity"/>
    <property type="evidence" value="ECO:0007669"/>
    <property type="project" value="UniProtKB-EC"/>
</dbReference>
<dbReference type="GO" id="GO:0016872">
    <property type="term" value="F:intramolecular lyase activity"/>
    <property type="evidence" value="ECO:0007669"/>
    <property type="project" value="UniProtKB-UniRule"/>
</dbReference>
<dbReference type="GO" id="GO:0048029">
    <property type="term" value="F:monosaccharide binding"/>
    <property type="evidence" value="ECO:0007669"/>
    <property type="project" value="InterPro"/>
</dbReference>
<dbReference type="GO" id="GO:0019303">
    <property type="term" value="P:D-ribose catabolic process"/>
    <property type="evidence" value="ECO:0007669"/>
    <property type="project" value="UniProtKB-UniRule"/>
</dbReference>
<dbReference type="FunFam" id="3.40.1650.10:FF:000002">
    <property type="entry name" value="D-ribose pyranase"/>
    <property type="match status" value="1"/>
</dbReference>
<dbReference type="Gene3D" id="3.40.1650.10">
    <property type="entry name" value="RbsD-like domain"/>
    <property type="match status" value="1"/>
</dbReference>
<dbReference type="HAMAP" id="MF_01661">
    <property type="entry name" value="D_rib_pyranase"/>
    <property type="match status" value="1"/>
</dbReference>
<dbReference type="InterPro" id="IPR023064">
    <property type="entry name" value="D-ribose_pyranase"/>
</dbReference>
<dbReference type="InterPro" id="IPR023750">
    <property type="entry name" value="RbsD-like_sf"/>
</dbReference>
<dbReference type="InterPro" id="IPR007721">
    <property type="entry name" value="RbsD_FucU"/>
</dbReference>
<dbReference type="NCBIfam" id="NF008761">
    <property type="entry name" value="PRK11797.1"/>
    <property type="match status" value="1"/>
</dbReference>
<dbReference type="PANTHER" id="PTHR37831">
    <property type="entry name" value="D-RIBOSE PYRANASE"/>
    <property type="match status" value="1"/>
</dbReference>
<dbReference type="PANTHER" id="PTHR37831:SF1">
    <property type="entry name" value="D-RIBOSE PYRANASE"/>
    <property type="match status" value="1"/>
</dbReference>
<dbReference type="Pfam" id="PF05025">
    <property type="entry name" value="RbsD_FucU"/>
    <property type="match status" value="1"/>
</dbReference>
<dbReference type="SUPFAM" id="SSF102546">
    <property type="entry name" value="RbsD-like"/>
    <property type="match status" value="1"/>
</dbReference>
<keyword id="KW-0119">Carbohydrate metabolism</keyword>
<keyword id="KW-0963">Cytoplasm</keyword>
<keyword id="KW-0413">Isomerase</keyword>
<accession>B4TN49</accession>
<sequence length="139" mass="15189">MKKGTVLNSEISSVISRLGHTDTLVVCDAGLPIPNSTARIDMALTQGVPSFMQVVDVVTREMQVEAAILATEIKQQNPQLHETLLTHLEQLQQHQGNTIKISYTTHEQFKKLTADSQAVIRSGECSPYANVILCAGVTF</sequence>
<organism>
    <name type="scientific">Salmonella schwarzengrund (strain CVM19633)</name>
    <dbReference type="NCBI Taxonomy" id="439843"/>
    <lineage>
        <taxon>Bacteria</taxon>
        <taxon>Pseudomonadati</taxon>
        <taxon>Pseudomonadota</taxon>
        <taxon>Gammaproteobacteria</taxon>
        <taxon>Enterobacterales</taxon>
        <taxon>Enterobacteriaceae</taxon>
        <taxon>Salmonella</taxon>
    </lineage>
</organism>
<feature type="chain" id="PRO_1000187166" description="D-ribose pyranase">
    <location>
        <begin position="1"/>
        <end position="139"/>
    </location>
</feature>
<feature type="active site" description="Proton donor" evidence="1">
    <location>
        <position position="20"/>
    </location>
</feature>
<feature type="binding site" evidence="1">
    <location>
        <position position="28"/>
    </location>
    <ligand>
        <name>substrate</name>
    </ligand>
</feature>
<feature type="binding site" evidence="1">
    <location>
        <position position="106"/>
    </location>
    <ligand>
        <name>substrate</name>
    </ligand>
</feature>
<feature type="binding site" evidence="1">
    <location>
        <begin position="128"/>
        <end position="130"/>
    </location>
    <ligand>
        <name>substrate</name>
    </ligand>
</feature>
<protein>
    <recommendedName>
        <fullName evidence="1">D-ribose pyranase</fullName>
        <ecNumber evidence="1">5.4.99.62</ecNumber>
    </recommendedName>
</protein>
<comment type="function">
    <text evidence="1">Catalyzes the interconversion of beta-pyran and beta-furan forms of D-ribose.</text>
</comment>
<comment type="catalytic activity">
    <reaction evidence="1">
        <text>beta-D-ribopyranose = beta-D-ribofuranose</text>
        <dbReference type="Rhea" id="RHEA:25432"/>
        <dbReference type="ChEBI" id="CHEBI:27476"/>
        <dbReference type="ChEBI" id="CHEBI:47002"/>
        <dbReference type="EC" id="5.4.99.62"/>
    </reaction>
</comment>
<comment type="pathway">
    <text evidence="1">Carbohydrate metabolism; D-ribose degradation; D-ribose 5-phosphate from beta-D-ribopyranose: step 1/2.</text>
</comment>
<comment type="subunit">
    <text evidence="1">Homodecamer.</text>
</comment>
<comment type="subcellular location">
    <subcellularLocation>
        <location evidence="1">Cytoplasm</location>
    </subcellularLocation>
</comment>
<comment type="similarity">
    <text evidence="1">Belongs to the RbsD / FucU family. RbsD subfamily.</text>
</comment>
<name>RBSD_SALSV</name>
<evidence type="ECO:0000255" key="1">
    <source>
        <dbReference type="HAMAP-Rule" id="MF_01661"/>
    </source>
</evidence>
<proteinExistence type="inferred from homology"/>